<accession>A0QP32</accession>
<accession>I7G2R6</accession>
<keyword id="KW-0963">Cytoplasm</keyword>
<keyword id="KW-0210">Decarboxylase</keyword>
<keyword id="KW-0312">Gluconeogenesis</keyword>
<keyword id="KW-0342">GTP-binding</keyword>
<keyword id="KW-1017">Isopeptide bond</keyword>
<keyword id="KW-0456">Lyase</keyword>
<keyword id="KW-0464">Manganese</keyword>
<keyword id="KW-0479">Metal-binding</keyword>
<keyword id="KW-0547">Nucleotide-binding</keyword>
<keyword id="KW-1185">Reference proteome</keyword>
<keyword id="KW-0832">Ubl conjugation</keyword>
<gene>
    <name evidence="1" type="primary">pckG</name>
    <name type="ordered locus">MSMEG_0255</name>
    <name type="ordered locus">MSMEI_0248</name>
</gene>
<proteinExistence type="evidence at protein level"/>
<comment type="function">
    <text evidence="1">Catalyzes the conversion of oxaloacetate (OAA) to phosphoenolpyruvate (PEP), the rate-limiting step in the metabolic pathway that produces glucose from lactate and other precursors derived from the citric acid cycle.</text>
</comment>
<comment type="catalytic activity">
    <reaction evidence="1">
        <text>oxaloacetate + GTP = phosphoenolpyruvate + GDP + CO2</text>
        <dbReference type="Rhea" id="RHEA:10388"/>
        <dbReference type="ChEBI" id="CHEBI:16452"/>
        <dbReference type="ChEBI" id="CHEBI:16526"/>
        <dbReference type="ChEBI" id="CHEBI:37565"/>
        <dbReference type="ChEBI" id="CHEBI:58189"/>
        <dbReference type="ChEBI" id="CHEBI:58702"/>
        <dbReference type="EC" id="4.1.1.32"/>
    </reaction>
</comment>
<comment type="cofactor">
    <cofactor evidence="1">
        <name>Mn(2+)</name>
        <dbReference type="ChEBI" id="CHEBI:29035"/>
    </cofactor>
    <text evidence="1">Binds 1 Mn(2+) ion per subunit.</text>
</comment>
<comment type="pathway">
    <text evidence="1">Carbohydrate biosynthesis; gluconeogenesis.</text>
</comment>
<comment type="subunit">
    <text evidence="1">Monomer.</text>
</comment>
<comment type="subcellular location">
    <subcellularLocation>
        <location evidence="1">Cytoplasm</location>
    </subcellularLocation>
</comment>
<comment type="similarity">
    <text evidence="1">Belongs to the phosphoenolpyruvate carboxykinase [GTP] family.</text>
</comment>
<sequence length="608" mass="67297">MTSATIPGLDTAPTKHQGLLAWVQEVAELTQPDRVVFADGSDEEYERLCAHLVEAGTFQKLNPEKQPNSYLALSDPSDVARVESRTFICTEREIDAGPTNNWMDPAEMRGIMTDLYRGSMRGRTLYVVPFCMGPLDAEDPKLGVEITDSEYVVVSMRTMTRMGRAALDKLGDDGFFVKALHSIGAPLEPGQKDVPWPCNDTKYITHFPETREIWSFGSGYGGNALLGKKCYSLRIASAMAHDEGWLAEHMLILKLISPENKAYFIAAAFPSACGKTNLAMLQPTIEGWRAETVGDDIAWMRFGKDGRLYATNPEFGFFGVAPGTNWSSNPNAMKTIAAGNTVFTNVAKTDDGDVWWEGLEGDPQHLIDWKGNDWTPESGEKAAHPNSRYCTPISQCPTLAPEWDDPQGVPISAILFGGRRKTTVPLITEARDWQHGVFIGATLGSEQTAAAEGKVGTVRRDPMAMLPFLGYNVGDYFAHWINVGKNADESKLPKVFFVNWFRRGDDGRFLWPGFGENSRVLKWAVERIEHKADGKSTPIGIVPTAADLDLEGLDVDPADVDEALAVKPEEWRAELPLIEEWFEFVGEKLPTGLKDEFDALKHRLSEEG</sequence>
<organism>
    <name type="scientific">Mycolicibacterium smegmatis (strain ATCC 700084 / mc(2)155)</name>
    <name type="common">Mycobacterium smegmatis</name>
    <dbReference type="NCBI Taxonomy" id="246196"/>
    <lineage>
        <taxon>Bacteria</taxon>
        <taxon>Bacillati</taxon>
        <taxon>Actinomycetota</taxon>
        <taxon>Actinomycetes</taxon>
        <taxon>Mycobacteriales</taxon>
        <taxon>Mycobacteriaceae</taxon>
        <taxon>Mycolicibacterium</taxon>
    </lineage>
</organism>
<dbReference type="EC" id="4.1.1.32" evidence="1"/>
<dbReference type="EMBL" id="CP000480">
    <property type="protein sequence ID" value="ABK74449.1"/>
    <property type="molecule type" value="Genomic_DNA"/>
</dbReference>
<dbReference type="EMBL" id="CP001663">
    <property type="protein sequence ID" value="AFP36729.1"/>
    <property type="molecule type" value="Genomic_DNA"/>
</dbReference>
<dbReference type="RefSeq" id="WP_011726783.1">
    <property type="nucleotide sequence ID" value="NZ_SIJM01000018.1"/>
</dbReference>
<dbReference type="RefSeq" id="YP_884670.1">
    <property type="nucleotide sequence ID" value="NC_008596.1"/>
</dbReference>
<dbReference type="SMR" id="A0QP32"/>
<dbReference type="STRING" id="246196.MSMEG_0255"/>
<dbReference type="PaxDb" id="246196-MSMEI_0248"/>
<dbReference type="KEGG" id="msb:LJ00_01280"/>
<dbReference type="KEGG" id="msg:MSMEI_0248"/>
<dbReference type="KEGG" id="msm:MSMEG_0255"/>
<dbReference type="PATRIC" id="fig|246196.19.peg.251"/>
<dbReference type="eggNOG" id="COG1274">
    <property type="taxonomic scope" value="Bacteria"/>
</dbReference>
<dbReference type="OrthoDB" id="9758871at2"/>
<dbReference type="UniPathway" id="UPA00138"/>
<dbReference type="Proteomes" id="UP000000757">
    <property type="component" value="Chromosome"/>
</dbReference>
<dbReference type="Proteomes" id="UP000006158">
    <property type="component" value="Chromosome"/>
</dbReference>
<dbReference type="GO" id="GO:0005829">
    <property type="term" value="C:cytosol"/>
    <property type="evidence" value="ECO:0007669"/>
    <property type="project" value="TreeGrafter"/>
</dbReference>
<dbReference type="GO" id="GO:0005525">
    <property type="term" value="F:GTP binding"/>
    <property type="evidence" value="ECO:0007669"/>
    <property type="project" value="UniProtKB-UniRule"/>
</dbReference>
<dbReference type="GO" id="GO:0030145">
    <property type="term" value="F:manganese ion binding"/>
    <property type="evidence" value="ECO:0007669"/>
    <property type="project" value="UniProtKB-UniRule"/>
</dbReference>
<dbReference type="GO" id="GO:0004613">
    <property type="term" value="F:phosphoenolpyruvate carboxykinase (GTP) activity"/>
    <property type="evidence" value="ECO:0007669"/>
    <property type="project" value="UniProtKB-UniRule"/>
</dbReference>
<dbReference type="GO" id="GO:0071333">
    <property type="term" value="P:cellular response to glucose stimulus"/>
    <property type="evidence" value="ECO:0007669"/>
    <property type="project" value="TreeGrafter"/>
</dbReference>
<dbReference type="GO" id="GO:0006094">
    <property type="term" value="P:gluconeogenesis"/>
    <property type="evidence" value="ECO:0007669"/>
    <property type="project" value="UniProtKB-UniRule"/>
</dbReference>
<dbReference type="GO" id="GO:0046327">
    <property type="term" value="P:glycerol biosynthetic process from pyruvate"/>
    <property type="evidence" value="ECO:0007669"/>
    <property type="project" value="TreeGrafter"/>
</dbReference>
<dbReference type="GO" id="GO:0006107">
    <property type="term" value="P:oxaloacetate metabolic process"/>
    <property type="evidence" value="ECO:0007669"/>
    <property type="project" value="TreeGrafter"/>
</dbReference>
<dbReference type="GO" id="GO:0019543">
    <property type="term" value="P:propionate catabolic process"/>
    <property type="evidence" value="ECO:0007669"/>
    <property type="project" value="TreeGrafter"/>
</dbReference>
<dbReference type="GO" id="GO:0033993">
    <property type="term" value="P:response to lipid"/>
    <property type="evidence" value="ECO:0007669"/>
    <property type="project" value="TreeGrafter"/>
</dbReference>
<dbReference type="GO" id="GO:0042594">
    <property type="term" value="P:response to starvation"/>
    <property type="evidence" value="ECO:0007669"/>
    <property type="project" value="TreeGrafter"/>
</dbReference>
<dbReference type="CDD" id="cd00819">
    <property type="entry name" value="PEPCK_GTP"/>
    <property type="match status" value="1"/>
</dbReference>
<dbReference type="FunFam" id="3.40.449.10:FF:000005">
    <property type="entry name" value="Phosphoenolpyruvate carboxykinase [GTP]"/>
    <property type="match status" value="1"/>
</dbReference>
<dbReference type="Gene3D" id="3.90.228.20">
    <property type="match status" value="1"/>
</dbReference>
<dbReference type="Gene3D" id="3.40.449.10">
    <property type="entry name" value="Phosphoenolpyruvate Carboxykinase, domain 1"/>
    <property type="match status" value="1"/>
</dbReference>
<dbReference type="Gene3D" id="2.170.8.10">
    <property type="entry name" value="Phosphoenolpyruvate Carboxykinase, domain 2"/>
    <property type="match status" value="1"/>
</dbReference>
<dbReference type="HAMAP" id="MF_00452">
    <property type="entry name" value="PEPCK_GTP"/>
    <property type="match status" value="1"/>
</dbReference>
<dbReference type="InterPro" id="IPR018091">
    <property type="entry name" value="PEP_carboxykin_GTP_CS"/>
</dbReference>
<dbReference type="InterPro" id="IPR013035">
    <property type="entry name" value="PEP_carboxykinase_C"/>
</dbReference>
<dbReference type="InterPro" id="IPR008209">
    <property type="entry name" value="PEP_carboxykinase_GTP"/>
</dbReference>
<dbReference type="InterPro" id="IPR035077">
    <property type="entry name" value="PEP_carboxykinase_GTP_C"/>
</dbReference>
<dbReference type="InterPro" id="IPR035078">
    <property type="entry name" value="PEP_carboxykinase_GTP_N"/>
</dbReference>
<dbReference type="InterPro" id="IPR008210">
    <property type="entry name" value="PEP_carboxykinase_N"/>
</dbReference>
<dbReference type="NCBIfam" id="NF003253">
    <property type="entry name" value="PRK04210.1"/>
    <property type="match status" value="1"/>
</dbReference>
<dbReference type="PANTHER" id="PTHR11561">
    <property type="entry name" value="PHOSPHOENOLPYRUVATE CARBOXYKINASE"/>
    <property type="match status" value="1"/>
</dbReference>
<dbReference type="PANTHER" id="PTHR11561:SF0">
    <property type="entry name" value="PHOSPHOENOLPYRUVATE CARBOXYKINASE [GTP]-RELATED"/>
    <property type="match status" value="1"/>
</dbReference>
<dbReference type="Pfam" id="PF00821">
    <property type="entry name" value="PEPCK_GTP"/>
    <property type="match status" value="1"/>
</dbReference>
<dbReference type="Pfam" id="PF17297">
    <property type="entry name" value="PEPCK_N"/>
    <property type="match status" value="1"/>
</dbReference>
<dbReference type="PIRSF" id="PIRSF001348">
    <property type="entry name" value="PEP_carboxykinase_GTP"/>
    <property type="match status" value="1"/>
</dbReference>
<dbReference type="SUPFAM" id="SSF68923">
    <property type="entry name" value="PEP carboxykinase N-terminal domain"/>
    <property type="match status" value="1"/>
</dbReference>
<dbReference type="SUPFAM" id="SSF53795">
    <property type="entry name" value="PEP carboxykinase-like"/>
    <property type="match status" value="1"/>
</dbReference>
<dbReference type="PROSITE" id="PS00505">
    <property type="entry name" value="PEPCK_GTP"/>
    <property type="match status" value="1"/>
</dbReference>
<evidence type="ECO:0000255" key="1">
    <source>
        <dbReference type="HAMAP-Rule" id="MF_00452"/>
    </source>
</evidence>
<evidence type="ECO:0000269" key="2">
    <source>
    </source>
</evidence>
<reference key="1">
    <citation type="submission" date="2006-10" db="EMBL/GenBank/DDBJ databases">
        <authorList>
            <person name="Fleischmann R.D."/>
            <person name="Dodson R.J."/>
            <person name="Haft D.H."/>
            <person name="Merkel J.S."/>
            <person name="Nelson W.C."/>
            <person name="Fraser C.M."/>
        </authorList>
    </citation>
    <scope>NUCLEOTIDE SEQUENCE [LARGE SCALE GENOMIC DNA]</scope>
    <source>
        <strain>ATCC 700084 / mc(2)155</strain>
    </source>
</reference>
<reference key="2">
    <citation type="journal article" date="2007" name="Genome Biol.">
        <title>Interrupted coding sequences in Mycobacterium smegmatis: authentic mutations or sequencing errors?</title>
        <authorList>
            <person name="Deshayes C."/>
            <person name="Perrodou E."/>
            <person name="Gallien S."/>
            <person name="Euphrasie D."/>
            <person name="Schaeffer C."/>
            <person name="Van-Dorsselaer A."/>
            <person name="Poch O."/>
            <person name="Lecompte O."/>
            <person name="Reyrat J.-M."/>
        </authorList>
    </citation>
    <scope>NUCLEOTIDE SEQUENCE [LARGE SCALE GENOMIC DNA]</scope>
    <source>
        <strain>ATCC 700084 / mc(2)155</strain>
    </source>
</reference>
<reference key="3">
    <citation type="journal article" date="2009" name="Genome Res.">
        <title>Ortho-proteogenomics: multiple proteomes investigation through orthology and a new MS-based protocol.</title>
        <authorList>
            <person name="Gallien S."/>
            <person name="Perrodou E."/>
            <person name="Carapito C."/>
            <person name="Deshayes C."/>
            <person name="Reyrat J.-M."/>
            <person name="Van Dorsselaer A."/>
            <person name="Poch O."/>
            <person name="Schaeffer C."/>
            <person name="Lecompte O."/>
        </authorList>
    </citation>
    <scope>NUCLEOTIDE SEQUENCE [LARGE SCALE GENOMIC DNA]</scope>
    <source>
        <strain>ATCC 700084 / mc(2)155</strain>
    </source>
</reference>
<reference key="4">
    <citation type="journal article" date="2010" name="Mol. Biosyst.">
        <title>Expansion of the mycobacterial 'PUPylome'.</title>
        <authorList>
            <person name="Watrous J."/>
            <person name="Burns K."/>
            <person name="Liu W.T."/>
            <person name="Patel A."/>
            <person name="Hook V."/>
            <person name="Bafna V."/>
            <person name="Barry C.E. III"/>
            <person name="Bark S."/>
            <person name="Dorrestein P.C."/>
        </authorList>
    </citation>
    <scope>PUPYLATION AT LYS-485</scope>
    <scope>IDENTIFICATION BY MASS SPECTROMETRY</scope>
</reference>
<protein>
    <recommendedName>
        <fullName evidence="1">Phosphoenolpyruvate carboxykinase [GTP]</fullName>
        <shortName evidence="1">PEP carboxykinase</shortName>
        <shortName evidence="1">PEPCK</shortName>
        <ecNumber evidence="1">4.1.1.32</ecNumber>
    </recommendedName>
</protein>
<name>PCKG_MYCS2</name>
<feature type="chain" id="PRO_1000060292" description="Phosphoenolpyruvate carboxykinase [GTP]">
    <location>
        <begin position="1"/>
        <end position="608"/>
    </location>
</feature>
<feature type="active site" evidence="1">
    <location>
        <position position="273"/>
    </location>
</feature>
<feature type="binding site" evidence="1">
    <location>
        <position position="81"/>
    </location>
    <ligand>
        <name>substrate</name>
    </ligand>
</feature>
<feature type="binding site" evidence="1">
    <location>
        <begin position="220"/>
        <end position="222"/>
    </location>
    <ligand>
        <name>substrate</name>
    </ligand>
</feature>
<feature type="binding site" evidence="1">
    <location>
        <position position="229"/>
    </location>
    <ligand>
        <name>Mn(2+)</name>
        <dbReference type="ChEBI" id="CHEBI:29035"/>
    </ligand>
</feature>
<feature type="binding site" evidence="1">
    <location>
        <position position="249"/>
    </location>
    <ligand>
        <name>Mn(2+)</name>
        <dbReference type="ChEBI" id="CHEBI:29035"/>
    </ligand>
</feature>
<feature type="binding site" evidence="1">
    <location>
        <position position="271"/>
    </location>
    <ligand>
        <name>substrate</name>
    </ligand>
</feature>
<feature type="binding site" evidence="1">
    <location>
        <begin position="272"/>
        <end position="277"/>
    </location>
    <ligand>
        <name>GTP</name>
        <dbReference type="ChEBI" id="CHEBI:37565"/>
    </ligand>
</feature>
<feature type="binding site" evidence="1">
    <location>
        <position position="296"/>
    </location>
    <ligand>
        <name>Mn(2+)</name>
        <dbReference type="ChEBI" id="CHEBI:29035"/>
    </ligand>
</feature>
<feature type="binding site" evidence="1">
    <location>
        <begin position="386"/>
        <end position="388"/>
    </location>
    <ligand>
        <name>substrate</name>
    </ligand>
</feature>
<feature type="binding site" evidence="1">
    <location>
        <position position="388"/>
    </location>
    <ligand>
        <name>GTP</name>
        <dbReference type="ChEBI" id="CHEBI:37565"/>
    </ligand>
</feature>
<feature type="binding site" evidence="1">
    <location>
        <position position="419"/>
    </location>
    <ligand>
        <name>GTP</name>
        <dbReference type="ChEBI" id="CHEBI:37565"/>
    </ligand>
</feature>
<feature type="binding site" evidence="1">
    <location>
        <begin position="514"/>
        <end position="517"/>
    </location>
    <ligand>
        <name>GTP</name>
        <dbReference type="ChEBI" id="CHEBI:37565"/>
    </ligand>
</feature>
<feature type="cross-link" description="Isoglutamyl lysine isopeptide (Lys-Gln) (interchain with Q-Cter in protein Pup)" evidence="2">
    <location>
        <position position="485"/>
    </location>
</feature>